<proteinExistence type="inferred from homology"/>
<accession>A9VTE3</accession>
<comment type="function">
    <text evidence="1">Transfers an acetyl group from acetyl-CoA to L-homoserine, forming acetyl-L-homoserine.</text>
</comment>
<comment type="catalytic activity">
    <reaction evidence="1">
        <text>L-homoserine + acetyl-CoA = O-acetyl-L-homoserine + CoA</text>
        <dbReference type="Rhea" id="RHEA:13701"/>
        <dbReference type="ChEBI" id="CHEBI:57287"/>
        <dbReference type="ChEBI" id="CHEBI:57288"/>
        <dbReference type="ChEBI" id="CHEBI:57476"/>
        <dbReference type="ChEBI" id="CHEBI:57716"/>
        <dbReference type="EC" id="2.3.1.31"/>
    </reaction>
</comment>
<comment type="pathway">
    <text evidence="1">Amino-acid biosynthesis; L-methionine biosynthesis via de novo pathway; O-acetyl-L-homoserine from L-homoserine: step 1/1.</text>
</comment>
<comment type="subcellular location">
    <subcellularLocation>
        <location evidence="1">Cytoplasm</location>
    </subcellularLocation>
</comment>
<comment type="similarity">
    <text evidence="1">Belongs to the MetA family.</text>
</comment>
<feature type="chain" id="PRO_1000115174" description="Homoserine O-acetyltransferase">
    <location>
        <begin position="1"/>
        <end position="301"/>
    </location>
</feature>
<feature type="active site" description="Acyl-thioester intermediate" evidence="1">
    <location>
        <position position="142"/>
    </location>
</feature>
<feature type="active site" description="Proton acceptor" evidence="1">
    <location>
        <position position="235"/>
    </location>
</feature>
<feature type="active site" evidence="1">
    <location>
        <position position="237"/>
    </location>
</feature>
<feature type="binding site" evidence="1">
    <location>
        <position position="163"/>
    </location>
    <ligand>
        <name>substrate</name>
    </ligand>
</feature>
<feature type="binding site" evidence="1">
    <location>
        <position position="192"/>
    </location>
    <ligand>
        <name>substrate</name>
    </ligand>
</feature>
<feature type="binding site" evidence="1">
    <location>
        <position position="249"/>
    </location>
    <ligand>
        <name>substrate</name>
    </ligand>
</feature>
<feature type="site" description="Important for acyl-CoA specificity" evidence="1">
    <location>
        <position position="111"/>
    </location>
</feature>
<feature type="site" description="Important for substrate specificity" evidence="1">
    <location>
        <position position="192"/>
    </location>
</feature>
<evidence type="ECO:0000255" key="1">
    <source>
        <dbReference type="HAMAP-Rule" id="MF_00295"/>
    </source>
</evidence>
<keyword id="KW-0012">Acyltransferase</keyword>
<keyword id="KW-0028">Amino-acid biosynthesis</keyword>
<keyword id="KW-0963">Cytoplasm</keyword>
<keyword id="KW-0486">Methionine biosynthesis</keyword>
<keyword id="KW-0808">Transferase</keyword>
<sequence>MPIIIDKDLPARKVLQKENIFVMTKERAVTQDIRALKIAILNLMPTKQETEAQLLRLIGNTPLQLDVHLLHMESHLSRNVAQDHLTSFYKTFRDIEDEKFDGLIITGAPVETLSFEEVDYWEELGRIMEYSKTNVTSTLHICWGAQAGLYYHYGVPKYPLAEKMFGVFEHEVREQHVKLLQGFDEVFFAPHSRHTEVRESDIEKVKELTLLANSEEAGVHLAIGQEGRQVFALGHSEYSCDTLKQEYERDCQRGLNIDVPKNYFKHNNPNEKPIVRWRSHGNLLFSNWLNYYVYQETPYIL</sequence>
<gene>
    <name evidence="1" type="primary">metAA</name>
    <name type="ordered locus">BcerKBAB4_5198</name>
</gene>
<reference key="1">
    <citation type="journal article" date="2008" name="Chem. Biol. Interact.">
        <title>Extending the Bacillus cereus group genomics to putative food-borne pathogens of different toxicity.</title>
        <authorList>
            <person name="Lapidus A."/>
            <person name="Goltsman E."/>
            <person name="Auger S."/>
            <person name="Galleron N."/>
            <person name="Segurens B."/>
            <person name="Dossat C."/>
            <person name="Land M.L."/>
            <person name="Broussolle V."/>
            <person name="Brillard J."/>
            <person name="Guinebretiere M.-H."/>
            <person name="Sanchis V."/>
            <person name="Nguen-the C."/>
            <person name="Lereclus D."/>
            <person name="Richardson P."/>
            <person name="Wincker P."/>
            <person name="Weissenbach J."/>
            <person name="Ehrlich S.D."/>
            <person name="Sorokin A."/>
        </authorList>
    </citation>
    <scope>NUCLEOTIDE SEQUENCE [LARGE SCALE GENOMIC DNA]</scope>
    <source>
        <strain>KBAB4</strain>
    </source>
</reference>
<name>METAA_BACMK</name>
<dbReference type="EC" id="2.3.1.31" evidence="1"/>
<dbReference type="EMBL" id="CP000903">
    <property type="protein sequence ID" value="ABY46343.1"/>
    <property type="molecule type" value="Genomic_DNA"/>
</dbReference>
<dbReference type="SMR" id="A9VTE3"/>
<dbReference type="KEGG" id="bwe:BcerKBAB4_5198"/>
<dbReference type="eggNOG" id="COG1897">
    <property type="taxonomic scope" value="Bacteria"/>
</dbReference>
<dbReference type="HOGENOM" id="CLU_057851_0_1_9"/>
<dbReference type="UniPathway" id="UPA00051">
    <property type="reaction ID" value="UER00074"/>
</dbReference>
<dbReference type="Proteomes" id="UP000002154">
    <property type="component" value="Chromosome"/>
</dbReference>
<dbReference type="GO" id="GO:0005737">
    <property type="term" value="C:cytoplasm"/>
    <property type="evidence" value="ECO:0007669"/>
    <property type="project" value="UniProtKB-SubCell"/>
</dbReference>
<dbReference type="GO" id="GO:0004414">
    <property type="term" value="F:homoserine O-acetyltransferase activity"/>
    <property type="evidence" value="ECO:0007669"/>
    <property type="project" value="UniProtKB-EC"/>
</dbReference>
<dbReference type="GO" id="GO:0008899">
    <property type="term" value="F:homoserine O-succinyltransferase activity"/>
    <property type="evidence" value="ECO:0007669"/>
    <property type="project" value="UniProtKB-UniRule"/>
</dbReference>
<dbReference type="GO" id="GO:0019281">
    <property type="term" value="P:L-methionine biosynthetic process from homoserine via O-succinyl-L-homoserine and cystathionine"/>
    <property type="evidence" value="ECO:0007669"/>
    <property type="project" value="InterPro"/>
</dbReference>
<dbReference type="CDD" id="cd03131">
    <property type="entry name" value="GATase1_HTS"/>
    <property type="match status" value="1"/>
</dbReference>
<dbReference type="FunFam" id="3.40.50.880:FF:000004">
    <property type="entry name" value="Homoserine O-succinyltransferase"/>
    <property type="match status" value="1"/>
</dbReference>
<dbReference type="Gene3D" id="3.40.50.880">
    <property type="match status" value="1"/>
</dbReference>
<dbReference type="HAMAP" id="MF_00295">
    <property type="entry name" value="MetA_acyltransf"/>
    <property type="match status" value="1"/>
</dbReference>
<dbReference type="InterPro" id="IPR029062">
    <property type="entry name" value="Class_I_gatase-like"/>
</dbReference>
<dbReference type="InterPro" id="IPR005697">
    <property type="entry name" value="HST_MetA"/>
</dbReference>
<dbReference type="InterPro" id="IPR033752">
    <property type="entry name" value="MetA_family"/>
</dbReference>
<dbReference type="NCBIfam" id="TIGR01001">
    <property type="entry name" value="metA"/>
    <property type="match status" value="1"/>
</dbReference>
<dbReference type="PANTHER" id="PTHR20919">
    <property type="entry name" value="HOMOSERINE O-SUCCINYLTRANSFERASE"/>
    <property type="match status" value="1"/>
</dbReference>
<dbReference type="PANTHER" id="PTHR20919:SF0">
    <property type="entry name" value="HOMOSERINE O-SUCCINYLTRANSFERASE"/>
    <property type="match status" value="1"/>
</dbReference>
<dbReference type="Pfam" id="PF04204">
    <property type="entry name" value="HTS"/>
    <property type="match status" value="1"/>
</dbReference>
<dbReference type="PIRSF" id="PIRSF000450">
    <property type="entry name" value="H_ser_succinyltr"/>
    <property type="match status" value="1"/>
</dbReference>
<dbReference type="SUPFAM" id="SSF52317">
    <property type="entry name" value="Class I glutamine amidotransferase-like"/>
    <property type="match status" value="1"/>
</dbReference>
<protein>
    <recommendedName>
        <fullName evidence="1">Homoserine O-acetyltransferase</fullName>
        <shortName evidence="1">HAT</shortName>
        <ecNumber evidence="1">2.3.1.31</ecNumber>
    </recommendedName>
    <alternativeName>
        <fullName evidence="1">Homoserine transacetylase</fullName>
        <shortName evidence="1">HTA</shortName>
    </alternativeName>
</protein>
<organism>
    <name type="scientific">Bacillus mycoides (strain KBAB4)</name>
    <name type="common">Bacillus weihenstephanensis</name>
    <dbReference type="NCBI Taxonomy" id="315730"/>
    <lineage>
        <taxon>Bacteria</taxon>
        <taxon>Bacillati</taxon>
        <taxon>Bacillota</taxon>
        <taxon>Bacilli</taxon>
        <taxon>Bacillales</taxon>
        <taxon>Bacillaceae</taxon>
        <taxon>Bacillus</taxon>
        <taxon>Bacillus cereus group</taxon>
    </lineage>
</organism>